<sequence length="274" mass="29583">MTQQLEQIIDQAWENRADFSPKNAPADLRNAVAQVIAQLNEGTLRVAQKDSGAWVVNQWVKKAVLLSFRLEDNIAMPSGEYMQFYDKVPTKFANYTAEDFAKGGFRVVPPAVARHGSFIGKNVVMMPSFVNIGAYVDEGSMVDAWATVGSCAQIGKNVHLSGGVGIGGVLEPMQANPTIIEDNCFIGARSEIVEGVIVEENSVISMGVYIGQSTKIYDRATGEVTYGRIPAGSVVVSGNLPSADGKYSLYCAVIVKRVDAKTRAKTGINELLRD</sequence>
<organism>
    <name type="scientific">Herminiimonas arsenicoxydans</name>
    <dbReference type="NCBI Taxonomy" id="204773"/>
    <lineage>
        <taxon>Bacteria</taxon>
        <taxon>Pseudomonadati</taxon>
        <taxon>Pseudomonadota</taxon>
        <taxon>Betaproteobacteria</taxon>
        <taxon>Burkholderiales</taxon>
        <taxon>Oxalobacteraceae</taxon>
        <taxon>Herminiimonas</taxon>
    </lineage>
</organism>
<keyword id="KW-0012">Acyltransferase</keyword>
<keyword id="KW-0028">Amino-acid biosynthesis</keyword>
<keyword id="KW-0963">Cytoplasm</keyword>
<keyword id="KW-0220">Diaminopimelate biosynthesis</keyword>
<keyword id="KW-0457">Lysine biosynthesis</keyword>
<keyword id="KW-1185">Reference proteome</keyword>
<keyword id="KW-0677">Repeat</keyword>
<keyword id="KW-0808">Transferase</keyword>
<proteinExistence type="inferred from homology"/>
<gene>
    <name evidence="1" type="primary">dapD</name>
    <name type="ordered locus">HEAR1324</name>
</gene>
<comment type="catalytic activity">
    <reaction evidence="1">
        <text>(S)-2,3,4,5-tetrahydrodipicolinate + succinyl-CoA + H2O = (S)-2-succinylamino-6-oxoheptanedioate + CoA</text>
        <dbReference type="Rhea" id="RHEA:17325"/>
        <dbReference type="ChEBI" id="CHEBI:15377"/>
        <dbReference type="ChEBI" id="CHEBI:15685"/>
        <dbReference type="ChEBI" id="CHEBI:16845"/>
        <dbReference type="ChEBI" id="CHEBI:57287"/>
        <dbReference type="ChEBI" id="CHEBI:57292"/>
        <dbReference type="EC" id="2.3.1.117"/>
    </reaction>
</comment>
<comment type="pathway">
    <text evidence="1">Amino-acid biosynthesis; L-lysine biosynthesis via DAP pathway; LL-2,6-diaminopimelate from (S)-tetrahydrodipicolinate (succinylase route): step 1/3.</text>
</comment>
<comment type="subunit">
    <text evidence="1">Homotrimer.</text>
</comment>
<comment type="subcellular location">
    <subcellularLocation>
        <location evidence="1">Cytoplasm</location>
    </subcellularLocation>
</comment>
<comment type="similarity">
    <text evidence="1">Belongs to the transferase hexapeptide repeat family.</text>
</comment>
<protein>
    <recommendedName>
        <fullName evidence="1">2,3,4,5-tetrahydropyridine-2,6-dicarboxylate N-succinyltransferase</fullName>
        <ecNumber evidence="1">2.3.1.117</ecNumber>
    </recommendedName>
    <alternativeName>
        <fullName evidence="1">Tetrahydrodipicolinate N-succinyltransferase</fullName>
        <shortName evidence="1">THDP succinyltransferase</shortName>
        <shortName evidence="1">THP succinyltransferase</shortName>
        <shortName evidence="1">Tetrahydropicolinate succinylase</shortName>
    </alternativeName>
</protein>
<accession>A4G4R0</accession>
<evidence type="ECO:0000255" key="1">
    <source>
        <dbReference type="HAMAP-Rule" id="MF_00811"/>
    </source>
</evidence>
<name>DAPD_HERAR</name>
<dbReference type="EC" id="2.3.1.117" evidence="1"/>
<dbReference type="EMBL" id="CU207211">
    <property type="protein sequence ID" value="CAL61497.1"/>
    <property type="molecule type" value="Genomic_DNA"/>
</dbReference>
<dbReference type="SMR" id="A4G4R0"/>
<dbReference type="STRING" id="204773.HEAR1324"/>
<dbReference type="KEGG" id="har:HEAR1324"/>
<dbReference type="eggNOG" id="COG2171">
    <property type="taxonomic scope" value="Bacteria"/>
</dbReference>
<dbReference type="HOGENOM" id="CLU_050859_0_1_4"/>
<dbReference type="OrthoDB" id="9775362at2"/>
<dbReference type="UniPathway" id="UPA00034">
    <property type="reaction ID" value="UER00019"/>
</dbReference>
<dbReference type="Proteomes" id="UP000006697">
    <property type="component" value="Chromosome"/>
</dbReference>
<dbReference type="GO" id="GO:0005737">
    <property type="term" value="C:cytoplasm"/>
    <property type="evidence" value="ECO:0007669"/>
    <property type="project" value="UniProtKB-SubCell"/>
</dbReference>
<dbReference type="GO" id="GO:0008666">
    <property type="term" value="F:2,3,4,5-tetrahydropyridine-2,6-dicarboxylate N-succinyltransferase activity"/>
    <property type="evidence" value="ECO:0007669"/>
    <property type="project" value="UniProtKB-UniRule"/>
</dbReference>
<dbReference type="GO" id="GO:0016779">
    <property type="term" value="F:nucleotidyltransferase activity"/>
    <property type="evidence" value="ECO:0007669"/>
    <property type="project" value="TreeGrafter"/>
</dbReference>
<dbReference type="GO" id="GO:0019877">
    <property type="term" value="P:diaminopimelate biosynthetic process"/>
    <property type="evidence" value="ECO:0007669"/>
    <property type="project" value="UniProtKB-UniRule"/>
</dbReference>
<dbReference type="GO" id="GO:0009089">
    <property type="term" value="P:lysine biosynthetic process via diaminopimelate"/>
    <property type="evidence" value="ECO:0007669"/>
    <property type="project" value="UniProtKB-UniRule"/>
</dbReference>
<dbReference type="CDD" id="cd03350">
    <property type="entry name" value="LbH_THP_succinylT"/>
    <property type="match status" value="1"/>
</dbReference>
<dbReference type="Gene3D" id="2.160.10.10">
    <property type="entry name" value="Hexapeptide repeat proteins"/>
    <property type="match status" value="1"/>
</dbReference>
<dbReference type="Gene3D" id="1.10.166.10">
    <property type="entry name" value="Tetrahydrodipicolinate-N-succinyltransferase, N-terminal domain"/>
    <property type="match status" value="1"/>
</dbReference>
<dbReference type="HAMAP" id="MF_00811">
    <property type="entry name" value="DapD"/>
    <property type="match status" value="1"/>
</dbReference>
<dbReference type="InterPro" id="IPR005664">
    <property type="entry name" value="DapD_Trfase_Hexpep_rpt_fam"/>
</dbReference>
<dbReference type="InterPro" id="IPR001451">
    <property type="entry name" value="Hexapep"/>
</dbReference>
<dbReference type="InterPro" id="IPR018357">
    <property type="entry name" value="Hexapep_transf_CS"/>
</dbReference>
<dbReference type="InterPro" id="IPR023180">
    <property type="entry name" value="THP_succinylTrfase_dom1"/>
</dbReference>
<dbReference type="InterPro" id="IPR037133">
    <property type="entry name" value="THP_succinylTrfase_N_sf"/>
</dbReference>
<dbReference type="InterPro" id="IPR011004">
    <property type="entry name" value="Trimer_LpxA-like_sf"/>
</dbReference>
<dbReference type="NCBIfam" id="TIGR00965">
    <property type="entry name" value="dapD"/>
    <property type="match status" value="1"/>
</dbReference>
<dbReference type="NCBIfam" id="NF008808">
    <property type="entry name" value="PRK11830.1"/>
    <property type="match status" value="1"/>
</dbReference>
<dbReference type="PANTHER" id="PTHR19136:SF52">
    <property type="entry name" value="2,3,4,5-TETRAHYDROPYRIDINE-2,6-DICARBOXYLATE N-SUCCINYLTRANSFERASE"/>
    <property type="match status" value="1"/>
</dbReference>
<dbReference type="PANTHER" id="PTHR19136">
    <property type="entry name" value="MOLYBDENUM COFACTOR GUANYLYLTRANSFERASE"/>
    <property type="match status" value="1"/>
</dbReference>
<dbReference type="Pfam" id="PF14602">
    <property type="entry name" value="Hexapep_2"/>
    <property type="match status" value="1"/>
</dbReference>
<dbReference type="Pfam" id="PF14805">
    <property type="entry name" value="THDPS_N_2"/>
    <property type="match status" value="1"/>
</dbReference>
<dbReference type="SUPFAM" id="SSF51161">
    <property type="entry name" value="Trimeric LpxA-like enzymes"/>
    <property type="match status" value="1"/>
</dbReference>
<dbReference type="PROSITE" id="PS00101">
    <property type="entry name" value="HEXAPEP_TRANSFERASES"/>
    <property type="match status" value="1"/>
</dbReference>
<reference key="1">
    <citation type="journal article" date="2007" name="PLoS Genet.">
        <title>A tale of two oxidation states: bacterial colonization of arsenic-rich environments.</title>
        <authorList>
            <person name="Muller D."/>
            <person name="Medigue C."/>
            <person name="Koechler S."/>
            <person name="Barbe V."/>
            <person name="Barakat M."/>
            <person name="Talla E."/>
            <person name="Bonnefoy V."/>
            <person name="Krin E."/>
            <person name="Arsene-Ploetze F."/>
            <person name="Carapito C."/>
            <person name="Chandler M."/>
            <person name="Cournoyer B."/>
            <person name="Cruveiller S."/>
            <person name="Dossat C."/>
            <person name="Duval S."/>
            <person name="Heymann M."/>
            <person name="Leize E."/>
            <person name="Lieutaud A."/>
            <person name="Lievremont D."/>
            <person name="Makita Y."/>
            <person name="Mangenot S."/>
            <person name="Nitschke W."/>
            <person name="Ortet P."/>
            <person name="Perdrial N."/>
            <person name="Schoepp B."/>
            <person name="Siguier P."/>
            <person name="Simeonova D.D."/>
            <person name="Rouy Z."/>
            <person name="Segurens B."/>
            <person name="Turlin E."/>
            <person name="Vallenet D."/>
            <person name="van Dorsselaer A."/>
            <person name="Weiss S."/>
            <person name="Weissenbach J."/>
            <person name="Lett M.-C."/>
            <person name="Danchin A."/>
            <person name="Bertin P.N."/>
        </authorList>
    </citation>
    <scope>NUCLEOTIDE SEQUENCE [LARGE SCALE GENOMIC DNA]</scope>
    <source>
        <strain>ULPAs1</strain>
    </source>
</reference>
<feature type="chain" id="PRO_1000047144" description="2,3,4,5-tetrahydropyridine-2,6-dicarboxylate N-succinyltransferase">
    <location>
        <begin position="1"/>
        <end position="274"/>
    </location>
</feature>
<feature type="binding site" evidence="1">
    <location>
        <position position="106"/>
    </location>
    <ligand>
        <name>substrate</name>
    </ligand>
</feature>
<feature type="binding site" evidence="1">
    <location>
        <position position="143"/>
    </location>
    <ligand>
        <name>substrate</name>
    </ligand>
</feature>